<geneLocation type="non-photosynthetic plastid"/>
<gene>
    <name evidence="1" type="primary">rps19</name>
</gene>
<sequence length="92" mass="10359">MTRSLGKGPFVANHLLKEIEILNFGGSEEVVVTWSRASTIVPVMIGHTIAIHNGREHLPIYITDRMVGHKLGEFAPTRTFRGHARNDKKSRR</sequence>
<keyword id="KW-0934">Plastid</keyword>
<keyword id="KW-0687">Ribonucleoprotein</keyword>
<keyword id="KW-0689">Ribosomal protein</keyword>
<keyword id="KW-0694">RNA-binding</keyword>
<keyword id="KW-0699">rRNA-binding</keyword>
<accession>B0YPR6</accession>
<comment type="function">
    <text evidence="1">Protein S19 forms a complex with S13 that binds strongly to the 16S ribosomal RNA.</text>
</comment>
<comment type="subcellular location">
    <subcellularLocation>
        <location>Plastid</location>
    </subcellularLocation>
</comment>
<comment type="similarity">
    <text evidence="1">Belongs to the universal ribosomal protein uS19 family.</text>
</comment>
<name>RR19_ANEMR</name>
<proteinExistence type="inferred from homology"/>
<feature type="chain" id="PRO_0000354332" description="Small ribosomal subunit protein uS19c">
    <location>
        <begin position="1"/>
        <end position="92"/>
    </location>
</feature>
<evidence type="ECO:0000255" key="1">
    <source>
        <dbReference type="HAMAP-Rule" id="MF_00531"/>
    </source>
</evidence>
<evidence type="ECO:0000305" key="2"/>
<organism>
    <name type="scientific">Aneura mirabilis</name>
    <name type="common">Parasitic liverwort</name>
    <name type="synonym">Cryptothallus mirabilis</name>
    <dbReference type="NCBI Taxonomy" id="280810"/>
    <lineage>
        <taxon>Eukaryota</taxon>
        <taxon>Viridiplantae</taxon>
        <taxon>Streptophyta</taxon>
        <taxon>Embryophyta</taxon>
        <taxon>Marchantiophyta</taxon>
        <taxon>Jungermanniopsida</taxon>
        <taxon>Metzgeriidae</taxon>
        <taxon>Metzgeriales</taxon>
        <taxon>Aneuraceae</taxon>
        <taxon>Aneura</taxon>
    </lineage>
</organism>
<reference key="1">
    <citation type="journal article" date="2008" name="Mol. Biol. Evol.">
        <title>Functional gene losses occur with minimal size reduction in the plastid genome of the parasitic liverwort Aneura mirabilis.</title>
        <authorList>
            <person name="Wickett N.J."/>
            <person name="Zhang Y."/>
            <person name="Hansen S.K."/>
            <person name="Roper J.M."/>
            <person name="Kuehl J.V."/>
            <person name="Plock S.A."/>
            <person name="Wolf P.G."/>
            <person name="dePamphilis C.W."/>
            <person name="Boore J.L."/>
            <person name="Goffinet B."/>
        </authorList>
    </citation>
    <scope>NUCLEOTIDE SEQUENCE [LARGE SCALE GENOMIC DNA]</scope>
</reference>
<protein>
    <recommendedName>
        <fullName evidence="1">Small ribosomal subunit protein uS19c</fullName>
    </recommendedName>
    <alternativeName>
        <fullName evidence="2">30S ribosomal protein S19, plastid</fullName>
    </alternativeName>
</protein>
<dbReference type="EMBL" id="EU043314">
    <property type="protein sequence ID" value="ABS54514.1"/>
    <property type="molecule type" value="Genomic_DNA"/>
</dbReference>
<dbReference type="RefSeq" id="YP_001687252.1">
    <property type="nucleotide sequence ID" value="NC_010359.1"/>
</dbReference>
<dbReference type="SMR" id="B0YPR6"/>
<dbReference type="GeneID" id="5952187"/>
<dbReference type="GO" id="GO:0005763">
    <property type="term" value="C:mitochondrial small ribosomal subunit"/>
    <property type="evidence" value="ECO:0007669"/>
    <property type="project" value="TreeGrafter"/>
</dbReference>
<dbReference type="GO" id="GO:0009536">
    <property type="term" value="C:plastid"/>
    <property type="evidence" value="ECO:0007669"/>
    <property type="project" value="UniProtKB-SubCell"/>
</dbReference>
<dbReference type="GO" id="GO:0019843">
    <property type="term" value="F:rRNA binding"/>
    <property type="evidence" value="ECO:0007669"/>
    <property type="project" value="UniProtKB-KW"/>
</dbReference>
<dbReference type="GO" id="GO:0003735">
    <property type="term" value="F:structural constituent of ribosome"/>
    <property type="evidence" value="ECO:0007669"/>
    <property type="project" value="InterPro"/>
</dbReference>
<dbReference type="GO" id="GO:0000028">
    <property type="term" value="P:ribosomal small subunit assembly"/>
    <property type="evidence" value="ECO:0007669"/>
    <property type="project" value="TreeGrafter"/>
</dbReference>
<dbReference type="GO" id="GO:0006412">
    <property type="term" value="P:translation"/>
    <property type="evidence" value="ECO:0007669"/>
    <property type="project" value="InterPro"/>
</dbReference>
<dbReference type="FunFam" id="3.30.860.10:FF:000001">
    <property type="entry name" value="30S ribosomal protein S19"/>
    <property type="match status" value="1"/>
</dbReference>
<dbReference type="Gene3D" id="3.30.860.10">
    <property type="entry name" value="30s Ribosomal Protein S19, Chain A"/>
    <property type="match status" value="1"/>
</dbReference>
<dbReference type="HAMAP" id="MF_00531">
    <property type="entry name" value="Ribosomal_uS19"/>
    <property type="match status" value="1"/>
</dbReference>
<dbReference type="InterPro" id="IPR002222">
    <property type="entry name" value="Ribosomal_uS19"/>
</dbReference>
<dbReference type="InterPro" id="IPR005732">
    <property type="entry name" value="Ribosomal_uS19_bac-type"/>
</dbReference>
<dbReference type="InterPro" id="IPR020934">
    <property type="entry name" value="Ribosomal_uS19_CS"/>
</dbReference>
<dbReference type="InterPro" id="IPR023575">
    <property type="entry name" value="Ribosomal_uS19_SF"/>
</dbReference>
<dbReference type="NCBIfam" id="TIGR01050">
    <property type="entry name" value="rpsS_bact"/>
    <property type="match status" value="1"/>
</dbReference>
<dbReference type="PANTHER" id="PTHR11880">
    <property type="entry name" value="RIBOSOMAL PROTEIN S19P FAMILY MEMBER"/>
    <property type="match status" value="1"/>
</dbReference>
<dbReference type="PANTHER" id="PTHR11880:SF8">
    <property type="entry name" value="SMALL RIBOSOMAL SUBUNIT PROTEIN US19M"/>
    <property type="match status" value="1"/>
</dbReference>
<dbReference type="Pfam" id="PF00203">
    <property type="entry name" value="Ribosomal_S19"/>
    <property type="match status" value="1"/>
</dbReference>
<dbReference type="PIRSF" id="PIRSF002144">
    <property type="entry name" value="Ribosomal_S19"/>
    <property type="match status" value="1"/>
</dbReference>
<dbReference type="PRINTS" id="PR00975">
    <property type="entry name" value="RIBOSOMALS19"/>
</dbReference>
<dbReference type="SUPFAM" id="SSF54570">
    <property type="entry name" value="Ribosomal protein S19"/>
    <property type="match status" value="1"/>
</dbReference>
<dbReference type="PROSITE" id="PS00323">
    <property type="entry name" value="RIBOSOMAL_S19"/>
    <property type="match status" value="1"/>
</dbReference>